<name>TYSY_METAC</name>
<keyword id="KW-0963">Cytoplasm</keyword>
<keyword id="KW-0489">Methyltransferase</keyword>
<keyword id="KW-0545">Nucleotide biosynthesis</keyword>
<keyword id="KW-1185">Reference proteome</keyword>
<keyword id="KW-0808">Transferase</keyword>
<reference key="1">
    <citation type="journal article" date="2002" name="Genome Res.">
        <title>The genome of Methanosarcina acetivorans reveals extensive metabolic and physiological diversity.</title>
        <authorList>
            <person name="Galagan J.E."/>
            <person name="Nusbaum C."/>
            <person name="Roy A."/>
            <person name="Endrizzi M.G."/>
            <person name="Macdonald P."/>
            <person name="FitzHugh W."/>
            <person name="Calvo S."/>
            <person name="Engels R."/>
            <person name="Smirnov S."/>
            <person name="Atnoor D."/>
            <person name="Brown A."/>
            <person name="Allen N."/>
            <person name="Naylor J."/>
            <person name="Stange-Thomann N."/>
            <person name="DeArellano K."/>
            <person name="Johnson R."/>
            <person name="Linton L."/>
            <person name="McEwan P."/>
            <person name="McKernan K."/>
            <person name="Talamas J."/>
            <person name="Tirrell A."/>
            <person name="Ye W."/>
            <person name="Zimmer A."/>
            <person name="Barber R.D."/>
            <person name="Cann I."/>
            <person name="Graham D.E."/>
            <person name="Grahame D.A."/>
            <person name="Guss A.M."/>
            <person name="Hedderich R."/>
            <person name="Ingram-Smith C."/>
            <person name="Kuettner H.C."/>
            <person name="Krzycki J.A."/>
            <person name="Leigh J.A."/>
            <person name="Li W."/>
            <person name="Liu J."/>
            <person name="Mukhopadhyay B."/>
            <person name="Reeve J.N."/>
            <person name="Smith K."/>
            <person name="Springer T.A."/>
            <person name="Umayam L.A."/>
            <person name="White O."/>
            <person name="White R.H."/>
            <person name="de Macario E.C."/>
            <person name="Ferry J.G."/>
            <person name="Jarrell K.F."/>
            <person name="Jing H."/>
            <person name="Macario A.J.L."/>
            <person name="Paulsen I.T."/>
            <person name="Pritchett M."/>
            <person name="Sowers K.R."/>
            <person name="Swanson R.V."/>
            <person name="Zinder S.H."/>
            <person name="Lander E."/>
            <person name="Metcalf W.W."/>
            <person name="Birren B."/>
        </authorList>
    </citation>
    <scope>NUCLEOTIDE SEQUENCE [LARGE SCALE GENOMIC DNA]</scope>
    <source>
        <strain>ATCC 35395 / DSM 2834 / JCM 12185 / C2A</strain>
    </source>
</reference>
<comment type="function">
    <text evidence="1">May catalyze the biosynthesis of dTMP using an unknown cosubstrate.</text>
</comment>
<comment type="pathway">
    <text evidence="1">Pyrimidine metabolism; dTTP biosynthesis.</text>
</comment>
<comment type="subunit">
    <text evidence="1">Monomer.</text>
</comment>
<comment type="subcellular location">
    <subcellularLocation>
        <location evidence="1">Cytoplasm</location>
    </subcellularLocation>
</comment>
<comment type="similarity">
    <text evidence="1">Belongs to the thymidylate synthase family. Archaeal-type ThyA subfamily.</text>
</comment>
<comment type="sequence caution" evidence="2">
    <conflict type="erroneous initiation">
        <sequence resource="EMBL-CDS" id="AAM07882"/>
    </conflict>
</comment>
<organism>
    <name type="scientific">Methanosarcina acetivorans (strain ATCC 35395 / DSM 2834 / JCM 12185 / C2A)</name>
    <dbReference type="NCBI Taxonomy" id="188937"/>
    <lineage>
        <taxon>Archaea</taxon>
        <taxon>Methanobacteriati</taxon>
        <taxon>Methanobacteriota</taxon>
        <taxon>Stenosarchaea group</taxon>
        <taxon>Methanomicrobia</taxon>
        <taxon>Methanosarcinales</taxon>
        <taxon>Methanosarcinaceae</taxon>
        <taxon>Methanosarcina</taxon>
    </lineage>
</organism>
<evidence type="ECO:0000255" key="1">
    <source>
        <dbReference type="HAMAP-Rule" id="MF_01686"/>
    </source>
</evidence>
<evidence type="ECO:0000305" key="2"/>
<protein>
    <recommendedName>
        <fullName evidence="1">Putative thymidylate synthase</fullName>
        <shortName evidence="1">TS</shortName>
        <shortName evidence="1">TSase</shortName>
        <ecNumber evidence="1">2.1.1.-</ecNumber>
    </recommendedName>
</protein>
<feature type="chain" id="PRO_0000141054" description="Putative thymidylate synthase">
    <location>
        <begin position="1"/>
        <end position="217"/>
    </location>
</feature>
<feature type="active site" evidence="1">
    <location>
        <position position="139"/>
    </location>
</feature>
<gene>
    <name evidence="1" type="primary">thyA</name>
    <name type="ordered locus">MA_4543</name>
</gene>
<sequence length="217" mass="25159">MEDKFEIGRIIRAKNISDAWYRGLNIIWNHGQVITDERGSQIREFMDLMVVIENPYTDRIPEDTAWNEERLEEYAKQLISGENAQDFEYTYGQRLRNWNEEVDQIEYVIEKLQESPTSRRATAVTWIPPVDTKVNEVPCMILDDFKIRDGKVHLTTLFRSHDFGGAYPANLYGLSKLLEYVAGRVGVEPGMITTVSISAHVYDHDWDMVENIVKGIN</sequence>
<dbReference type="EC" id="2.1.1.-" evidence="1"/>
<dbReference type="EMBL" id="AE010299">
    <property type="protein sequence ID" value="AAM07882.1"/>
    <property type="status" value="ALT_INIT"/>
    <property type="molecule type" value="Genomic_DNA"/>
</dbReference>
<dbReference type="RefSeq" id="WP_048066013.1">
    <property type="nucleotide sequence ID" value="NC_003552.1"/>
</dbReference>
<dbReference type="SMR" id="Q8THH4"/>
<dbReference type="FunCoup" id="Q8THH4">
    <property type="interactions" value="20"/>
</dbReference>
<dbReference type="STRING" id="188937.MA_4543"/>
<dbReference type="EnsemblBacteria" id="AAM07882">
    <property type="protein sequence ID" value="AAM07882"/>
    <property type="gene ID" value="MA_4543"/>
</dbReference>
<dbReference type="GeneID" id="1476437"/>
<dbReference type="KEGG" id="mac:MA_4543"/>
<dbReference type="HOGENOM" id="CLU_084975_0_0_2"/>
<dbReference type="InParanoid" id="Q8THH4"/>
<dbReference type="OrthoDB" id="50118at2157"/>
<dbReference type="PhylomeDB" id="Q8THH4"/>
<dbReference type="UniPathway" id="UPA00575"/>
<dbReference type="Proteomes" id="UP000002487">
    <property type="component" value="Chromosome"/>
</dbReference>
<dbReference type="GO" id="GO:0005829">
    <property type="term" value="C:cytosol"/>
    <property type="evidence" value="ECO:0000318"/>
    <property type="project" value="GO_Central"/>
</dbReference>
<dbReference type="GO" id="GO:0004799">
    <property type="term" value="F:thymidylate synthase activity"/>
    <property type="evidence" value="ECO:0000318"/>
    <property type="project" value="GO_Central"/>
</dbReference>
<dbReference type="GO" id="GO:0006231">
    <property type="term" value="P:dTMP biosynthetic process"/>
    <property type="evidence" value="ECO:0000318"/>
    <property type="project" value="GO_Central"/>
</dbReference>
<dbReference type="GO" id="GO:0006235">
    <property type="term" value="P:dTTP biosynthetic process"/>
    <property type="evidence" value="ECO:0007669"/>
    <property type="project" value="UniProtKB-UniRule"/>
</dbReference>
<dbReference type="GO" id="GO:0032259">
    <property type="term" value="P:methylation"/>
    <property type="evidence" value="ECO:0007669"/>
    <property type="project" value="UniProtKB-KW"/>
</dbReference>
<dbReference type="CDD" id="cd00351">
    <property type="entry name" value="TS_Pyrimidine_HMase"/>
    <property type="match status" value="1"/>
</dbReference>
<dbReference type="FunFam" id="3.30.572.10:FF:000014">
    <property type="entry name" value="Putative thymidylate synthase"/>
    <property type="match status" value="1"/>
</dbReference>
<dbReference type="Gene3D" id="3.30.572.10">
    <property type="entry name" value="Thymidylate synthase/dCMP hydroxymethylase domain"/>
    <property type="match status" value="1"/>
</dbReference>
<dbReference type="HAMAP" id="MF_01686">
    <property type="entry name" value="Thymidy_synth_arch"/>
    <property type="match status" value="1"/>
</dbReference>
<dbReference type="InterPro" id="IPR045097">
    <property type="entry name" value="Thymidate_synth/dCMP_Mease"/>
</dbReference>
<dbReference type="InterPro" id="IPR023451">
    <property type="entry name" value="Thymidate_synth/dCMP_Mease_dom"/>
</dbReference>
<dbReference type="InterPro" id="IPR036926">
    <property type="entry name" value="Thymidate_synth/dCMP_Mease_sf"/>
</dbReference>
<dbReference type="InterPro" id="IPR014620">
    <property type="entry name" value="Thymidylate_synthase_arc"/>
</dbReference>
<dbReference type="NCBIfam" id="TIGR03283">
    <property type="entry name" value="thy_syn_methano"/>
    <property type="match status" value="1"/>
</dbReference>
<dbReference type="PANTHER" id="PTHR11548">
    <property type="entry name" value="THYMIDYLATE SYNTHASE 1"/>
    <property type="match status" value="1"/>
</dbReference>
<dbReference type="PANTHER" id="PTHR11548:SF1">
    <property type="entry name" value="THYMIDYLATE SYNTHASE 1"/>
    <property type="match status" value="1"/>
</dbReference>
<dbReference type="Pfam" id="PF00303">
    <property type="entry name" value="Thymidylat_synt"/>
    <property type="match status" value="1"/>
</dbReference>
<dbReference type="PIRSF" id="PIRSF036752">
    <property type="entry name" value="TSase_MJ051"/>
    <property type="match status" value="1"/>
</dbReference>
<dbReference type="SUPFAM" id="SSF55831">
    <property type="entry name" value="Thymidylate synthase/dCMP hydroxymethylase"/>
    <property type="match status" value="1"/>
</dbReference>
<proteinExistence type="inferred from homology"/>
<accession>Q8THH4</accession>